<sequence length="408" mass="46674">DRPRPARLSHARFSKNHSGRTHSMKDKAGRKHRPLDVFDFPDHSQLSSFSRLGENEKDEESYETFDPPLHSTAIYADEEEFSKQCGSHLPSTPQEKEAKRSSDTSEIEASENESVKISAKKPRRKLKPISDESESPEESDVRRKVKPTENISTQHEAVSATALPGLSEKPAEAVTPQKTGPQSAESSAEKATLATEHQLETQKNKMLPGKRKKPRSYTTDTSDCAPVWCLKEKKASEIMELDVFLSAFENILLEYEQKIDSRVCKAAINKFHSNLKEELIKMVQEIQMLKTLKRKNAKIISNIEKKRQRLIEVQDELLQVEPELKQLQIKYEELQERKASLRKAAYFLSNLKQLHQDYSDVQEEEPSVKETYDSSSLPALLFKARPLLGAEHHLQNINYQLENLLDQK</sequence>
<comment type="function">
    <text evidence="1">Component of the CENPA-NAC (nucleosome-associated) complex, a complex that plays a central role in assembly of kinetochore proteins, mitotic progression and chromosome segregation. The CENPA-NAC complex recruits the CENPA-CAD (nucleosome distal) complex and may be involved in incorporation of newly synthesized CENPA into centromeres. Plays an important role in the correct PLK1 localization to the mitotic kinetochores. A scaffold protein responsible for the initial recruitment and maintenance of the kinetochore PLK1 population until its degradation. Involved in transcriptional repression (By similarity).</text>
</comment>
<comment type="subunit">
    <text evidence="1">Component of the CENPA-NAC complex, at least composed of CENPA, CENPC, CENPH, CENPM, CENPN, CENPT and CENPU. The CENPA-NAC complex interacts with the CENPA-CAD complex, composed of CENPI, CENPK, CENPL, CENPO, CENPP, CENPQ, CENPR and CENPS. Interacts with MLF1 (By similarity).</text>
</comment>
<comment type="subcellular location">
    <subcellularLocation>
        <location evidence="1">Cytoplasm</location>
    </subcellularLocation>
    <subcellularLocation>
        <location evidence="1">Nucleus</location>
    </subcellularLocation>
    <subcellularLocation>
        <location evidence="1">Chromosome</location>
        <location evidence="1">Centromere</location>
        <location evidence="1">Kinetochore</location>
    </subcellularLocation>
    <text evidence="1">Localizes in the kinetochore domain of centromeres. Colocalizes with PLK1 at the interzone between the inner and the outer kinetochore plates (By similarity).</text>
</comment>
<comment type="PTM">
    <text evidence="1">Phosphorylated by PLK1 at Thr-72, creating a self-tethering site that specifically interacts with the polo-box domain of PLK1.</text>
</comment>
<comment type="similarity">
    <text evidence="6">Belongs to the CENP-U/AME1 family.</text>
</comment>
<keyword id="KW-0137">Centromere</keyword>
<keyword id="KW-0158">Chromosome</keyword>
<keyword id="KW-0175">Coiled coil</keyword>
<keyword id="KW-0963">Cytoplasm</keyword>
<keyword id="KW-1017">Isopeptide bond</keyword>
<keyword id="KW-0995">Kinetochore</keyword>
<keyword id="KW-0539">Nucleus</keyword>
<keyword id="KW-0597">Phosphoprotein</keyword>
<keyword id="KW-1185">Reference proteome</keyword>
<keyword id="KW-0678">Repressor</keyword>
<keyword id="KW-0804">Transcription</keyword>
<keyword id="KW-0805">Transcription regulation</keyword>
<keyword id="KW-0832">Ubl conjugation</keyword>
<accession>Q2KIW5</accession>
<organism>
    <name type="scientific">Bos taurus</name>
    <name type="common">Bovine</name>
    <dbReference type="NCBI Taxonomy" id="9913"/>
    <lineage>
        <taxon>Eukaryota</taxon>
        <taxon>Metazoa</taxon>
        <taxon>Chordata</taxon>
        <taxon>Craniata</taxon>
        <taxon>Vertebrata</taxon>
        <taxon>Euteleostomi</taxon>
        <taxon>Mammalia</taxon>
        <taxon>Eutheria</taxon>
        <taxon>Laurasiatheria</taxon>
        <taxon>Artiodactyla</taxon>
        <taxon>Ruminantia</taxon>
        <taxon>Pecora</taxon>
        <taxon>Bovidae</taxon>
        <taxon>Bovinae</taxon>
        <taxon>Bos</taxon>
    </lineage>
</organism>
<proteinExistence type="evidence at transcript level"/>
<reference key="1">
    <citation type="submission" date="2006-01" db="EMBL/GenBank/DDBJ databases">
        <authorList>
            <consortium name="NIH - Mammalian Gene Collection (MGC) project"/>
        </authorList>
    </citation>
    <scope>NUCLEOTIDE SEQUENCE [LARGE SCALE MRNA]</scope>
    <source>
        <strain>Hereford</strain>
        <tissue>Testis</tissue>
    </source>
</reference>
<name>CENPU_BOVIN</name>
<feature type="chain" id="PRO_0000247671" description="Centromere protein U">
    <location>
        <begin position="1" status="less than"/>
        <end position="408"/>
    </location>
</feature>
<feature type="region of interest" description="Disordered" evidence="5">
    <location>
        <begin position="1"/>
        <end position="218"/>
    </location>
</feature>
<feature type="coiled-coil region" evidence="4">
    <location>
        <begin position="273"/>
        <end position="350"/>
    </location>
</feature>
<feature type="short sequence motif" description="Nuclear localization signal" evidence="4">
    <location>
        <begin position="293"/>
        <end position="310"/>
    </location>
</feature>
<feature type="compositionally biased region" description="Basic residues" evidence="5">
    <location>
        <begin position="1"/>
        <end position="33"/>
    </location>
</feature>
<feature type="compositionally biased region" description="Basic and acidic residues" evidence="5">
    <location>
        <begin position="94"/>
        <end position="103"/>
    </location>
</feature>
<feature type="compositionally biased region" description="Basic residues" evidence="5">
    <location>
        <begin position="118"/>
        <end position="127"/>
    </location>
</feature>
<feature type="compositionally biased region" description="Polar residues" evidence="5">
    <location>
        <begin position="176"/>
        <end position="186"/>
    </location>
</feature>
<feature type="modified residue" description="Phosphothreonine; by PLK1" evidence="2">
    <location>
        <position position="72"/>
    </location>
</feature>
<feature type="modified residue" description="Phosphothreonine" evidence="2">
    <location>
        <position position="92"/>
    </location>
</feature>
<feature type="modified residue" description="Phosphoserine" evidence="2">
    <location>
        <position position="102"/>
    </location>
</feature>
<feature type="modified residue" description="Phosphothreonine" evidence="2">
    <location>
        <position position="104"/>
    </location>
</feature>
<feature type="modified residue" description="Phosphoserine" evidence="2">
    <location>
        <position position="105"/>
    </location>
</feature>
<feature type="modified residue" description="Phosphoserine" evidence="3">
    <location>
        <position position="110"/>
    </location>
</feature>
<feature type="modified residue" description="Phosphoserine" evidence="3">
    <location>
        <position position="114"/>
    </location>
</feature>
<feature type="modified residue" description="Phosphoserine" evidence="2">
    <location>
        <position position="130"/>
    </location>
</feature>
<feature type="modified residue" description="Phosphoserine" evidence="2">
    <location>
        <position position="133"/>
    </location>
</feature>
<feature type="modified residue" description="Phosphoserine" evidence="2">
    <location>
        <position position="135"/>
    </location>
</feature>
<feature type="modified residue" description="Phosphoserine" evidence="3">
    <location>
        <position position="183"/>
    </location>
</feature>
<feature type="modified residue" description="Phosphoserine" evidence="2">
    <location>
        <position position="187"/>
    </location>
</feature>
<feature type="modified residue" description="Phosphothreonine" evidence="3">
    <location>
        <position position="192"/>
    </location>
</feature>
<feature type="modified residue" description="Phosphoserine" evidence="2">
    <location>
        <position position="222"/>
    </location>
</feature>
<feature type="cross-link" description="Glycyl lysine isopeptide (Lys-Gly) (interchain with G-Cter in SUMO2)" evidence="2">
    <location>
        <position position="178"/>
    </location>
</feature>
<feature type="non-terminal residue">
    <location>
        <position position="1"/>
    </location>
</feature>
<dbReference type="EMBL" id="BC112483">
    <property type="protein sequence ID" value="AAI12484.1"/>
    <property type="molecule type" value="mRNA"/>
</dbReference>
<dbReference type="SMR" id="Q2KIW5"/>
<dbReference type="FunCoup" id="Q2KIW5">
    <property type="interactions" value="982"/>
</dbReference>
<dbReference type="STRING" id="9913.ENSBTAP00000025113"/>
<dbReference type="PaxDb" id="9913-ENSBTAP00000025113"/>
<dbReference type="eggNOG" id="ENOG502S1IM">
    <property type="taxonomic scope" value="Eukaryota"/>
</dbReference>
<dbReference type="InParanoid" id="Q2KIW5"/>
<dbReference type="OrthoDB" id="8959258at2759"/>
<dbReference type="Proteomes" id="UP000009136">
    <property type="component" value="Unplaced"/>
</dbReference>
<dbReference type="GO" id="GO:0005737">
    <property type="term" value="C:cytoplasm"/>
    <property type="evidence" value="ECO:0007669"/>
    <property type="project" value="UniProtKB-SubCell"/>
</dbReference>
<dbReference type="GO" id="GO:0000776">
    <property type="term" value="C:kinetochore"/>
    <property type="evidence" value="ECO:0007669"/>
    <property type="project" value="UniProtKB-KW"/>
</dbReference>
<dbReference type="GO" id="GO:0005634">
    <property type="term" value="C:nucleus"/>
    <property type="evidence" value="ECO:0000318"/>
    <property type="project" value="GO_Central"/>
</dbReference>
<dbReference type="InterPro" id="IPR025214">
    <property type="entry name" value="CENP-U"/>
</dbReference>
<dbReference type="PANTHER" id="PTHR32222">
    <property type="entry name" value="CENTROMERE PROTEIN U"/>
    <property type="match status" value="1"/>
</dbReference>
<dbReference type="PANTHER" id="PTHR32222:SF1">
    <property type="entry name" value="CENTROMERE PROTEIN U"/>
    <property type="match status" value="1"/>
</dbReference>
<dbReference type="Pfam" id="PF13097">
    <property type="entry name" value="CENP-U"/>
    <property type="match status" value="1"/>
</dbReference>
<evidence type="ECO:0000250" key="1"/>
<evidence type="ECO:0000250" key="2">
    <source>
        <dbReference type="UniProtKB" id="Q71F23"/>
    </source>
</evidence>
<evidence type="ECO:0000250" key="3">
    <source>
        <dbReference type="UniProtKB" id="Q8C4M7"/>
    </source>
</evidence>
<evidence type="ECO:0000255" key="4"/>
<evidence type="ECO:0000256" key="5">
    <source>
        <dbReference type="SAM" id="MobiDB-lite"/>
    </source>
</evidence>
<evidence type="ECO:0000305" key="6"/>
<gene>
    <name type="primary">CENPU</name>
    <name type="synonym">MLF1IP</name>
</gene>
<protein>
    <recommendedName>
        <fullName>Centromere protein U</fullName>
        <shortName>CENP-U</shortName>
    </recommendedName>
    <alternativeName>
        <fullName>MLF1-interacting protein</fullName>
    </alternativeName>
</protein>